<accession>J3SBP0</accession>
<sequence>MGRFIFVSFGLLVVFLSLSGTGADFDCPSGWSAYDQYCYKPFNEPQNWDDAERFCSEQAKGGHLVSIESDGEADFVAQLAQKIDKPDIYIWIGLRVQGKEQQCSSEWSDGSSIIYVNWNKGESQMCQGLTRWTNFLKWDYTDCQAKKPFVCKFPPEC</sequence>
<reference key="1">
    <citation type="journal article" date="2012" name="BMC Genomics">
        <title>The venom-gland transcriptome of the eastern diamondback rattlesnake (Crotalus adamanteus).</title>
        <authorList>
            <person name="Rokyta D.R."/>
            <person name="Lemmon A.R."/>
            <person name="Margres M.J."/>
            <person name="Aronow K."/>
        </authorList>
    </citation>
    <scope>NUCLEOTIDE SEQUENCE [MRNA]</scope>
    <source>
        <tissue>Venom gland</tissue>
    </source>
</reference>
<reference key="2">
    <citation type="journal article" date="2014" name="J. Proteomics">
        <title>Linking the transcriptome and proteome to characterize the venom of the eastern diamondback rattlesnake (Crotalus adamanteus).</title>
        <authorList>
            <person name="Margres M.J."/>
            <person name="McGivern J.J."/>
            <person name="Wray K.P."/>
            <person name="Seavy M."/>
            <person name="Calvin K."/>
            <person name="Rokyta D.R."/>
        </authorList>
    </citation>
    <scope>IDENTIFICATION BY MASS SPECTROMETRY</scope>
    <source>
        <tissue>Venom</tissue>
    </source>
</reference>
<dbReference type="EMBL" id="JU173659">
    <property type="protein sequence ID" value="AFJ49185.1"/>
    <property type="molecule type" value="mRNA"/>
</dbReference>
<dbReference type="SMR" id="J3SBP0"/>
<dbReference type="GO" id="GO:0005576">
    <property type="term" value="C:extracellular region"/>
    <property type="evidence" value="ECO:0007669"/>
    <property type="project" value="UniProtKB-SubCell"/>
</dbReference>
<dbReference type="GO" id="GO:0090729">
    <property type="term" value="F:toxin activity"/>
    <property type="evidence" value="ECO:0007669"/>
    <property type="project" value="UniProtKB-KW"/>
</dbReference>
<dbReference type="FunFam" id="3.10.100.10:FF:000087">
    <property type="entry name" value="Snaclec rhodocetin subunit delta"/>
    <property type="match status" value="1"/>
</dbReference>
<dbReference type="Gene3D" id="3.10.100.10">
    <property type="entry name" value="Mannose-Binding Protein A, subunit A"/>
    <property type="match status" value="1"/>
</dbReference>
<dbReference type="InterPro" id="IPR001304">
    <property type="entry name" value="C-type_lectin-like"/>
</dbReference>
<dbReference type="InterPro" id="IPR016186">
    <property type="entry name" value="C-type_lectin-like/link_sf"/>
</dbReference>
<dbReference type="InterPro" id="IPR050111">
    <property type="entry name" value="C-type_lectin/snaclec_domain"/>
</dbReference>
<dbReference type="InterPro" id="IPR016187">
    <property type="entry name" value="CTDL_fold"/>
</dbReference>
<dbReference type="PANTHER" id="PTHR22803">
    <property type="entry name" value="MANNOSE, PHOSPHOLIPASE, LECTIN RECEPTOR RELATED"/>
    <property type="match status" value="1"/>
</dbReference>
<dbReference type="Pfam" id="PF00059">
    <property type="entry name" value="Lectin_C"/>
    <property type="match status" value="1"/>
</dbReference>
<dbReference type="PRINTS" id="PR01504">
    <property type="entry name" value="PNCREATITSAP"/>
</dbReference>
<dbReference type="SMART" id="SM00034">
    <property type="entry name" value="CLECT"/>
    <property type="match status" value="1"/>
</dbReference>
<dbReference type="SUPFAM" id="SSF56436">
    <property type="entry name" value="C-type lectin-like"/>
    <property type="match status" value="1"/>
</dbReference>
<dbReference type="PROSITE" id="PS50041">
    <property type="entry name" value="C_TYPE_LECTIN_2"/>
    <property type="match status" value="1"/>
</dbReference>
<name>SL9A_CROAD</name>
<feature type="signal peptide" evidence="1">
    <location>
        <begin position="1"/>
        <end position="23"/>
    </location>
</feature>
<feature type="chain" id="PRO_0000425655" description="C-type lectin 9a">
    <location>
        <begin position="24"/>
        <end position="157"/>
    </location>
</feature>
<feature type="domain" description="C-type lectin" evidence="2">
    <location>
        <begin position="34"/>
        <end position="152"/>
    </location>
</feature>
<feature type="disulfide bond" evidence="2">
    <location>
        <begin position="27"/>
        <end position="38"/>
    </location>
</feature>
<feature type="disulfide bond" evidence="2">
    <location>
        <begin position="55"/>
        <end position="151"/>
    </location>
</feature>
<feature type="disulfide bond" description="Interchain" evidence="2">
    <location>
        <position position="103"/>
    </location>
</feature>
<feature type="disulfide bond" evidence="2">
    <location>
        <begin position="126"/>
        <end position="143"/>
    </location>
</feature>
<feature type="disulfide bond" description="Interchain" evidence="2">
    <location>
        <position position="157"/>
    </location>
</feature>
<protein>
    <recommendedName>
        <fullName>C-type lectin 9a</fullName>
    </recommendedName>
</protein>
<organism>
    <name type="scientific">Crotalus adamanteus</name>
    <name type="common">Eastern diamondback rattlesnake</name>
    <dbReference type="NCBI Taxonomy" id="8729"/>
    <lineage>
        <taxon>Eukaryota</taxon>
        <taxon>Metazoa</taxon>
        <taxon>Chordata</taxon>
        <taxon>Craniata</taxon>
        <taxon>Vertebrata</taxon>
        <taxon>Euteleostomi</taxon>
        <taxon>Lepidosauria</taxon>
        <taxon>Squamata</taxon>
        <taxon>Bifurcata</taxon>
        <taxon>Unidentata</taxon>
        <taxon>Episquamata</taxon>
        <taxon>Toxicofera</taxon>
        <taxon>Serpentes</taxon>
        <taxon>Colubroidea</taxon>
        <taxon>Viperidae</taxon>
        <taxon>Crotalinae</taxon>
        <taxon>Crotalus</taxon>
    </lineage>
</organism>
<evidence type="ECO:0000250" key="1"/>
<evidence type="ECO:0000255" key="2">
    <source>
        <dbReference type="PROSITE-ProRule" id="PRU00040"/>
    </source>
</evidence>
<evidence type="ECO:0000305" key="3"/>
<proteinExistence type="evidence at protein level"/>
<keyword id="KW-1015">Disulfide bond</keyword>
<keyword id="KW-1199">Hemostasis impairing toxin</keyword>
<keyword id="KW-0964">Secreted</keyword>
<keyword id="KW-0732">Signal</keyword>
<keyword id="KW-0800">Toxin</keyword>
<comment type="function">
    <text evidence="1">Interferes with one step of hemostasis (modulation of platelet aggregation, or coagulation cascade, for example).</text>
</comment>
<comment type="subunit">
    <text evidence="1">Heteromultimer; disulfide-linked.</text>
</comment>
<comment type="subcellular location">
    <subcellularLocation>
        <location>Secreted</location>
    </subcellularLocation>
</comment>
<comment type="tissue specificity">
    <text>Expressed by the venom gland.</text>
</comment>
<comment type="similarity">
    <text evidence="3">Belongs to the snaclec family.</text>
</comment>